<reference key="1">
    <citation type="journal article" date="2003" name="Genome Res.">
        <title>Comparative complete genome sequence analysis of the amino acid replacements responsible for the thermostability of Corynebacterium efficiens.</title>
        <authorList>
            <person name="Nishio Y."/>
            <person name="Nakamura Y."/>
            <person name="Kawarabayasi Y."/>
            <person name="Usuda Y."/>
            <person name="Kimura E."/>
            <person name="Sugimoto S."/>
            <person name="Matsui K."/>
            <person name="Yamagishi A."/>
            <person name="Kikuchi H."/>
            <person name="Ikeo K."/>
            <person name="Gojobori T."/>
        </authorList>
    </citation>
    <scope>NUCLEOTIDE SEQUENCE [LARGE SCALE GENOMIC DNA]</scope>
    <source>
        <strain>DSM 44549 / YS-314 / AJ 12310 / JCM 11189 / NBRC 100395</strain>
    </source>
</reference>
<keyword id="KW-0067">ATP-binding</keyword>
<keyword id="KW-0119">Carbohydrate metabolism</keyword>
<keyword id="KW-0320">Glycogen biosynthesis</keyword>
<keyword id="KW-0321">Glycogen metabolism</keyword>
<keyword id="KW-0547">Nucleotide-binding</keyword>
<keyword id="KW-0548">Nucleotidyltransferase</keyword>
<keyword id="KW-1185">Reference proteome</keyword>
<keyword id="KW-0808">Transferase</keyword>
<accession>Q8FQE4</accession>
<feature type="chain" id="PRO_0000195291" description="Glucose-1-phosphate adenylyltransferase">
    <location>
        <begin position="1"/>
        <end position="409"/>
    </location>
</feature>
<feature type="binding site" evidence="1">
    <location>
        <position position="168"/>
    </location>
    <ligand>
        <name>alpha-D-glucose 1-phosphate</name>
        <dbReference type="ChEBI" id="CHEBI:58601"/>
    </ligand>
</feature>
<feature type="binding site" evidence="1">
    <location>
        <begin position="183"/>
        <end position="184"/>
    </location>
    <ligand>
        <name>alpha-D-glucose 1-phosphate</name>
        <dbReference type="ChEBI" id="CHEBI:58601"/>
    </ligand>
</feature>
<feature type="binding site" evidence="1">
    <location>
        <position position="201"/>
    </location>
    <ligand>
        <name>alpha-D-glucose 1-phosphate</name>
        <dbReference type="ChEBI" id="CHEBI:58601"/>
    </ligand>
</feature>
<proteinExistence type="inferred from homology"/>
<evidence type="ECO:0000255" key="1">
    <source>
        <dbReference type="HAMAP-Rule" id="MF_00624"/>
    </source>
</evidence>
<evidence type="ECO:0000305" key="2"/>
<protein>
    <recommendedName>
        <fullName evidence="1">Glucose-1-phosphate adenylyltransferase</fullName>
        <ecNumber evidence="1">2.7.7.27</ecNumber>
    </recommendedName>
    <alternativeName>
        <fullName evidence="1">ADP-glucose pyrophosphorylase</fullName>
        <shortName evidence="1">ADPGlc PPase</shortName>
    </alternativeName>
    <alternativeName>
        <fullName evidence="1">ADP-glucose synthase</fullName>
    </alternativeName>
</protein>
<comment type="function">
    <text evidence="1">Involved in the biosynthesis of ADP-glucose, a building block required for the elongation reactions to produce glycogen. Catalyzes the reaction between ATP and alpha-D-glucose 1-phosphate (G1P) to produce pyrophosphate and ADP-Glc.</text>
</comment>
<comment type="catalytic activity">
    <reaction evidence="1">
        <text>alpha-D-glucose 1-phosphate + ATP + H(+) = ADP-alpha-D-glucose + diphosphate</text>
        <dbReference type="Rhea" id="RHEA:12120"/>
        <dbReference type="ChEBI" id="CHEBI:15378"/>
        <dbReference type="ChEBI" id="CHEBI:30616"/>
        <dbReference type="ChEBI" id="CHEBI:33019"/>
        <dbReference type="ChEBI" id="CHEBI:57498"/>
        <dbReference type="ChEBI" id="CHEBI:58601"/>
        <dbReference type="EC" id="2.7.7.27"/>
    </reaction>
</comment>
<comment type="pathway">
    <text evidence="1">Glycan biosynthesis; glycogen biosynthesis.</text>
</comment>
<comment type="subunit">
    <text evidence="1">Homotetramer.</text>
</comment>
<comment type="similarity">
    <text evidence="1">Belongs to the bacterial/plant glucose-1-phosphate adenylyltransferase family.</text>
</comment>
<comment type="sequence caution" evidence="2">
    <conflict type="erroneous initiation">
        <sequence resource="EMBL-CDS" id="BAC17985"/>
    </conflict>
</comment>
<name>GLGC_COREF</name>
<sequence>MVECVKGRPNVLAIVLAGGEGKRLFPLTEDRAKPAVPFGGTYRLIDFVLSNLVNAGYLKIAVLTQYKSHSLDRHISVSWNVSGPTGQYIASVPAQQRLGKRWFTGSADAILQSLNLISDEKPDYVIVFGADHVYRMDPSQMVDEHIKSGKSVSVAGIRVPRHEATAFGCIQSDDEGNITEFLEKPADPPGTPDDPDVTFASMGNYVFTTEALVRALKDDSENEDSEHDMGGDIIPYFVDRGDAHVYDFSRNIVPGATERDKGYWRDVGTIDAFYECHMDLISVHPIFNLYNKEWPIHTTVEGNLPPAKFVQGGIAQSSMVAPGSIISAGTVRNSVLSTDVIVEEGATVEGAVLMPGVRIGKGAVVRHAILDKNVVVRDGELIGVDHDRDSQRFKVSAGGVVTVGKNQVV</sequence>
<dbReference type="EC" id="2.7.7.27" evidence="1"/>
<dbReference type="EMBL" id="BA000035">
    <property type="protein sequence ID" value="BAC17985.1"/>
    <property type="status" value="ALT_INIT"/>
    <property type="molecule type" value="Genomic_DNA"/>
</dbReference>
<dbReference type="RefSeq" id="WP_006769865.1">
    <property type="nucleotide sequence ID" value="NC_004369.1"/>
</dbReference>
<dbReference type="SMR" id="Q8FQE4"/>
<dbReference type="STRING" id="196164.gene:10741583"/>
<dbReference type="KEGG" id="cef:CE1175"/>
<dbReference type="eggNOG" id="COG0448">
    <property type="taxonomic scope" value="Bacteria"/>
</dbReference>
<dbReference type="HOGENOM" id="CLU_029499_14_1_11"/>
<dbReference type="OrthoDB" id="9801810at2"/>
<dbReference type="UniPathway" id="UPA00164"/>
<dbReference type="Proteomes" id="UP000001409">
    <property type="component" value="Chromosome"/>
</dbReference>
<dbReference type="GO" id="GO:0005524">
    <property type="term" value="F:ATP binding"/>
    <property type="evidence" value="ECO:0007669"/>
    <property type="project" value="UniProtKB-KW"/>
</dbReference>
<dbReference type="GO" id="GO:0008878">
    <property type="term" value="F:glucose-1-phosphate adenylyltransferase activity"/>
    <property type="evidence" value="ECO:0007669"/>
    <property type="project" value="UniProtKB-UniRule"/>
</dbReference>
<dbReference type="GO" id="GO:0005978">
    <property type="term" value="P:glycogen biosynthetic process"/>
    <property type="evidence" value="ECO:0007669"/>
    <property type="project" value="UniProtKB-UniRule"/>
</dbReference>
<dbReference type="CDD" id="cd02508">
    <property type="entry name" value="ADP_Glucose_PP"/>
    <property type="match status" value="1"/>
</dbReference>
<dbReference type="CDD" id="cd04651">
    <property type="entry name" value="LbH_G1P_AT_C"/>
    <property type="match status" value="1"/>
</dbReference>
<dbReference type="Gene3D" id="2.160.10.10">
    <property type="entry name" value="Hexapeptide repeat proteins"/>
    <property type="match status" value="1"/>
</dbReference>
<dbReference type="Gene3D" id="3.90.550.10">
    <property type="entry name" value="Spore Coat Polysaccharide Biosynthesis Protein SpsA, Chain A"/>
    <property type="match status" value="1"/>
</dbReference>
<dbReference type="HAMAP" id="MF_00624">
    <property type="entry name" value="GlgC"/>
    <property type="match status" value="1"/>
</dbReference>
<dbReference type="InterPro" id="IPR011831">
    <property type="entry name" value="ADP-Glc_PPase"/>
</dbReference>
<dbReference type="InterPro" id="IPR005836">
    <property type="entry name" value="ADP_Glu_pyroP_CS"/>
</dbReference>
<dbReference type="InterPro" id="IPR023049">
    <property type="entry name" value="GlgC_bac"/>
</dbReference>
<dbReference type="InterPro" id="IPR056818">
    <property type="entry name" value="GlmU/GlgC-like_hexapep"/>
</dbReference>
<dbReference type="InterPro" id="IPR005835">
    <property type="entry name" value="NTP_transferase_dom"/>
</dbReference>
<dbReference type="InterPro" id="IPR029044">
    <property type="entry name" value="Nucleotide-diphossugar_trans"/>
</dbReference>
<dbReference type="InterPro" id="IPR011004">
    <property type="entry name" value="Trimer_LpxA-like_sf"/>
</dbReference>
<dbReference type="NCBIfam" id="TIGR02091">
    <property type="entry name" value="glgC"/>
    <property type="match status" value="1"/>
</dbReference>
<dbReference type="NCBIfam" id="NF001947">
    <property type="entry name" value="PRK00725.1"/>
    <property type="match status" value="1"/>
</dbReference>
<dbReference type="NCBIfam" id="NF002023">
    <property type="entry name" value="PRK00844.1"/>
    <property type="match status" value="1"/>
</dbReference>
<dbReference type="PANTHER" id="PTHR43523:SF2">
    <property type="entry name" value="GLUCOSE-1-PHOSPHATE ADENYLYLTRANSFERASE"/>
    <property type="match status" value="1"/>
</dbReference>
<dbReference type="PANTHER" id="PTHR43523">
    <property type="entry name" value="GLUCOSE-1-PHOSPHATE ADENYLYLTRANSFERASE-RELATED"/>
    <property type="match status" value="1"/>
</dbReference>
<dbReference type="Pfam" id="PF24894">
    <property type="entry name" value="Hexapep_GlmU"/>
    <property type="match status" value="1"/>
</dbReference>
<dbReference type="Pfam" id="PF00483">
    <property type="entry name" value="NTP_transferase"/>
    <property type="match status" value="1"/>
</dbReference>
<dbReference type="SUPFAM" id="SSF53448">
    <property type="entry name" value="Nucleotide-diphospho-sugar transferases"/>
    <property type="match status" value="1"/>
</dbReference>
<dbReference type="SUPFAM" id="SSF51161">
    <property type="entry name" value="Trimeric LpxA-like enzymes"/>
    <property type="match status" value="1"/>
</dbReference>
<dbReference type="PROSITE" id="PS00808">
    <property type="entry name" value="ADP_GLC_PYROPHOSPH_1"/>
    <property type="match status" value="1"/>
</dbReference>
<dbReference type="PROSITE" id="PS00809">
    <property type="entry name" value="ADP_GLC_PYROPHOSPH_2"/>
    <property type="match status" value="1"/>
</dbReference>
<dbReference type="PROSITE" id="PS00810">
    <property type="entry name" value="ADP_GLC_PYROPHOSPH_3"/>
    <property type="match status" value="1"/>
</dbReference>
<organism>
    <name type="scientific">Corynebacterium efficiens (strain DSM 44549 / YS-314 / AJ 12310 / JCM 11189 / NBRC 100395)</name>
    <dbReference type="NCBI Taxonomy" id="196164"/>
    <lineage>
        <taxon>Bacteria</taxon>
        <taxon>Bacillati</taxon>
        <taxon>Actinomycetota</taxon>
        <taxon>Actinomycetes</taxon>
        <taxon>Mycobacteriales</taxon>
        <taxon>Corynebacteriaceae</taxon>
        <taxon>Corynebacterium</taxon>
    </lineage>
</organism>
<gene>
    <name evidence="1" type="primary">glgC</name>
    <name type="ordered locus">CE1175</name>
</gene>